<proteinExistence type="inferred from homology"/>
<protein>
    <recommendedName>
        <fullName evidence="1">Large ribosomal subunit protein eL40</fullName>
    </recommendedName>
    <alternativeName>
        <fullName evidence="2">50S ribosomal protein L40e</fullName>
    </alternativeName>
</protein>
<dbReference type="EMBL" id="CP000099">
    <property type="protein sequence ID" value="AAZ69653.1"/>
    <property type="molecule type" value="Genomic_DNA"/>
</dbReference>
<dbReference type="SMR" id="Q46EN9"/>
<dbReference type="STRING" id="269797.Mbar_A0674"/>
<dbReference type="PaxDb" id="269797-Mbar_A0674"/>
<dbReference type="KEGG" id="mba:Mbar_A0674"/>
<dbReference type="eggNOG" id="arCOG04049">
    <property type="taxonomic scope" value="Archaea"/>
</dbReference>
<dbReference type="HOGENOM" id="CLU_205640_0_0_2"/>
<dbReference type="OrthoDB" id="45138at2157"/>
<dbReference type="GO" id="GO:1990904">
    <property type="term" value="C:ribonucleoprotein complex"/>
    <property type="evidence" value="ECO:0007669"/>
    <property type="project" value="UniProtKB-KW"/>
</dbReference>
<dbReference type="GO" id="GO:0005840">
    <property type="term" value="C:ribosome"/>
    <property type="evidence" value="ECO:0007669"/>
    <property type="project" value="UniProtKB-KW"/>
</dbReference>
<dbReference type="GO" id="GO:0003735">
    <property type="term" value="F:structural constituent of ribosome"/>
    <property type="evidence" value="ECO:0007669"/>
    <property type="project" value="InterPro"/>
</dbReference>
<dbReference type="GO" id="GO:0006412">
    <property type="term" value="P:translation"/>
    <property type="evidence" value="ECO:0007669"/>
    <property type="project" value="UniProtKB-UniRule"/>
</dbReference>
<dbReference type="Gene3D" id="4.10.1060.50">
    <property type="match status" value="1"/>
</dbReference>
<dbReference type="HAMAP" id="MF_00788">
    <property type="entry name" value="Ribosomal_eL40"/>
    <property type="match status" value="1"/>
</dbReference>
<dbReference type="InterPro" id="IPR023657">
    <property type="entry name" value="Ribosomal_eL40_arc"/>
</dbReference>
<dbReference type="InterPro" id="IPR001975">
    <property type="entry name" value="Ribosomal_eL40_dom"/>
</dbReference>
<dbReference type="InterPro" id="IPR038587">
    <property type="entry name" value="Ribosomal_eL40_sf"/>
</dbReference>
<dbReference type="InterPro" id="IPR011332">
    <property type="entry name" value="Ribosomal_zn-bd"/>
</dbReference>
<dbReference type="NCBIfam" id="NF003161">
    <property type="entry name" value="PRK04136.1"/>
    <property type="match status" value="1"/>
</dbReference>
<dbReference type="PANTHER" id="PTHR39649">
    <property type="entry name" value="50S RIBOSOMAL PROTEIN L40E"/>
    <property type="match status" value="1"/>
</dbReference>
<dbReference type="PANTHER" id="PTHR39649:SF1">
    <property type="entry name" value="LARGE RIBOSOMAL SUBUNIT PROTEIN EL40"/>
    <property type="match status" value="1"/>
</dbReference>
<dbReference type="Pfam" id="PF01020">
    <property type="entry name" value="Ribosomal_L40e"/>
    <property type="match status" value="1"/>
</dbReference>
<dbReference type="SMART" id="SM01377">
    <property type="entry name" value="Ribosomal_L40e"/>
    <property type="match status" value="1"/>
</dbReference>
<dbReference type="SUPFAM" id="SSF57829">
    <property type="entry name" value="Zn-binding ribosomal proteins"/>
    <property type="match status" value="1"/>
</dbReference>
<comment type="similarity">
    <text evidence="1">Belongs to the eukaryotic ribosomal protein eL40 family.</text>
</comment>
<organism>
    <name type="scientific">Methanosarcina barkeri (strain Fusaro / DSM 804)</name>
    <dbReference type="NCBI Taxonomy" id="269797"/>
    <lineage>
        <taxon>Archaea</taxon>
        <taxon>Methanobacteriati</taxon>
        <taxon>Methanobacteriota</taxon>
        <taxon>Stenosarchaea group</taxon>
        <taxon>Methanomicrobia</taxon>
        <taxon>Methanosarcinales</taxon>
        <taxon>Methanosarcinaceae</taxon>
        <taxon>Methanosarcina</taxon>
    </lineage>
</organism>
<keyword id="KW-0687">Ribonucleoprotein</keyword>
<keyword id="KW-0689">Ribosomal protein</keyword>
<gene>
    <name evidence="1" type="primary">rpl40e</name>
    <name type="ordered locus">Mbar_A0674</name>
</gene>
<sequence>MGRFPEAEERLLNKKICMRCNARNAIRATRCRKCGYSALRVKSKESKGA</sequence>
<name>RL40_METBF</name>
<accession>Q46EN9</accession>
<evidence type="ECO:0000255" key="1">
    <source>
        <dbReference type="HAMAP-Rule" id="MF_00788"/>
    </source>
</evidence>
<evidence type="ECO:0000305" key="2"/>
<reference key="1">
    <citation type="journal article" date="2006" name="J. Bacteriol.">
        <title>The Methanosarcina barkeri genome: comparative analysis with Methanosarcina acetivorans and Methanosarcina mazei reveals extensive rearrangement within methanosarcinal genomes.</title>
        <authorList>
            <person name="Maeder D.L."/>
            <person name="Anderson I."/>
            <person name="Brettin T.S."/>
            <person name="Bruce D.C."/>
            <person name="Gilna P."/>
            <person name="Han C.S."/>
            <person name="Lapidus A."/>
            <person name="Metcalf W.W."/>
            <person name="Saunders E."/>
            <person name="Tapia R."/>
            <person name="Sowers K.R."/>
        </authorList>
    </citation>
    <scope>NUCLEOTIDE SEQUENCE [LARGE SCALE GENOMIC DNA]</scope>
    <source>
        <strain>Fusaro / DSM 804</strain>
    </source>
</reference>
<feature type="chain" id="PRO_1000046881" description="Large ribosomal subunit protein eL40">
    <location>
        <begin position="1"/>
        <end position="49"/>
    </location>
</feature>